<gene>
    <name evidence="1" type="primary">fluC</name>
    <name evidence="1" type="synonym">crcB</name>
    <name type="ordered locus">HD_0024</name>
</gene>
<comment type="function">
    <text evidence="1">Fluoride-specific ion channel. Important for reducing fluoride concentration in the cell, thus reducing its toxicity.</text>
</comment>
<comment type="catalytic activity">
    <reaction evidence="1">
        <text>fluoride(in) = fluoride(out)</text>
        <dbReference type="Rhea" id="RHEA:76159"/>
        <dbReference type="ChEBI" id="CHEBI:17051"/>
    </reaction>
    <physiologicalReaction direction="left-to-right" evidence="1">
        <dbReference type="Rhea" id="RHEA:76160"/>
    </physiologicalReaction>
</comment>
<comment type="activity regulation">
    <text evidence="1">Na(+) is not transported, but it plays an essential structural role and its presence is essential for fluoride channel function.</text>
</comment>
<comment type="subcellular location">
    <subcellularLocation>
        <location evidence="1">Cell inner membrane</location>
        <topology evidence="1">Multi-pass membrane protein</topology>
    </subcellularLocation>
</comment>
<comment type="similarity">
    <text evidence="1">Belongs to the fluoride channel Fluc/FEX (TC 1.A.43) family.</text>
</comment>
<dbReference type="EMBL" id="AE017143">
    <property type="protein sequence ID" value="AAP95042.1"/>
    <property type="molecule type" value="Genomic_DNA"/>
</dbReference>
<dbReference type="SMR" id="Q7VPN2"/>
<dbReference type="STRING" id="233412.HD_0024"/>
<dbReference type="KEGG" id="hdu:HD_0024"/>
<dbReference type="eggNOG" id="COG0239">
    <property type="taxonomic scope" value="Bacteria"/>
</dbReference>
<dbReference type="HOGENOM" id="CLU_114342_3_3_6"/>
<dbReference type="Proteomes" id="UP000001022">
    <property type="component" value="Chromosome"/>
</dbReference>
<dbReference type="GO" id="GO:0005886">
    <property type="term" value="C:plasma membrane"/>
    <property type="evidence" value="ECO:0007669"/>
    <property type="project" value="UniProtKB-SubCell"/>
</dbReference>
<dbReference type="GO" id="GO:0062054">
    <property type="term" value="F:fluoride channel activity"/>
    <property type="evidence" value="ECO:0007669"/>
    <property type="project" value="UniProtKB-UniRule"/>
</dbReference>
<dbReference type="GO" id="GO:0046872">
    <property type="term" value="F:metal ion binding"/>
    <property type="evidence" value="ECO:0007669"/>
    <property type="project" value="UniProtKB-KW"/>
</dbReference>
<dbReference type="GO" id="GO:0140114">
    <property type="term" value="P:cellular detoxification of fluoride"/>
    <property type="evidence" value="ECO:0007669"/>
    <property type="project" value="UniProtKB-UniRule"/>
</dbReference>
<dbReference type="HAMAP" id="MF_00454">
    <property type="entry name" value="FluC"/>
    <property type="match status" value="1"/>
</dbReference>
<dbReference type="InterPro" id="IPR003691">
    <property type="entry name" value="FluC"/>
</dbReference>
<dbReference type="PANTHER" id="PTHR28259">
    <property type="entry name" value="FLUORIDE EXPORT PROTEIN 1-RELATED"/>
    <property type="match status" value="1"/>
</dbReference>
<dbReference type="PANTHER" id="PTHR28259:SF1">
    <property type="entry name" value="FLUORIDE EXPORT PROTEIN 1-RELATED"/>
    <property type="match status" value="1"/>
</dbReference>
<dbReference type="Pfam" id="PF02537">
    <property type="entry name" value="CRCB"/>
    <property type="match status" value="1"/>
</dbReference>
<organism>
    <name type="scientific">Haemophilus ducreyi (strain 35000HP / ATCC 700724)</name>
    <dbReference type="NCBI Taxonomy" id="233412"/>
    <lineage>
        <taxon>Bacteria</taxon>
        <taxon>Pseudomonadati</taxon>
        <taxon>Pseudomonadota</taxon>
        <taxon>Gammaproteobacteria</taxon>
        <taxon>Pasteurellales</taxon>
        <taxon>Pasteurellaceae</taxon>
        <taxon>Haemophilus</taxon>
    </lineage>
</organism>
<accession>Q7VPN2</accession>
<name>FLUC_HAEDU</name>
<keyword id="KW-0997">Cell inner membrane</keyword>
<keyword id="KW-1003">Cell membrane</keyword>
<keyword id="KW-0407">Ion channel</keyword>
<keyword id="KW-0406">Ion transport</keyword>
<keyword id="KW-0472">Membrane</keyword>
<keyword id="KW-0479">Metal-binding</keyword>
<keyword id="KW-1185">Reference proteome</keyword>
<keyword id="KW-0915">Sodium</keyword>
<keyword id="KW-0812">Transmembrane</keyword>
<keyword id="KW-1133">Transmembrane helix</keyword>
<keyword id="KW-0813">Transport</keyword>
<feature type="chain" id="PRO_0000110107" description="Fluoride-specific ion channel FluC">
    <location>
        <begin position="1"/>
        <end position="124"/>
    </location>
</feature>
<feature type="transmembrane region" description="Helical" evidence="1">
    <location>
        <begin position="5"/>
        <end position="25"/>
    </location>
</feature>
<feature type="transmembrane region" description="Helical" evidence="1">
    <location>
        <begin position="32"/>
        <end position="52"/>
    </location>
</feature>
<feature type="transmembrane region" description="Helical" evidence="1">
    <location>
        <begin position="61"/>
        <end position="81"/>
    </location>
</feature>
<feature type="transmembrane region" description="Helical" evidence="1">
    <location>
        <begin position="94"/>
        <end position="114"/>
    </location>
</feature>
<feature type="binding site" evidence="1">
    <location>
        <position position="69"/>
    </location>
    <ligand>
        <name>Na(+)</name>
        <dbReference type="ChEBI" id="CHEBI:29101"/>
        <note>structural</note>
    </ligand>
</feature>
<feature type="binding site" evidence="1">
    <location>
        <position position="72"/>
    </location>
    <ligand>
        <name>Na(+)</name>
        <dbReference type="ChEBI" id="CHEBI:29101"/>
        <note>structural</note>
    </ligand>
</feature>
<evidence type="ECO:0000255" key="1">
    <source>
        <dbReference type="HAMAP-Rule" id="MF_00454"/>
    </source>
</evidence>
<sequence length="124" mass="13623">MMNMLLVSLGAVAGAILRWQLAVWFNPFLTQFAFGTLFVNLCGCFLIGITLGVNLQDAQKLLFVTGFLGSFTTFSSFSAEVSQFILSEKYWRGLAVISAHLIGGLVLTILGILVAKFWVSGRFY</sequence>
<reference key="1">
    <citation type="submission" date="2003-06" db="EMBL/GenBank/DDBJ databases">
        <title>The complete genome sequence of Haemophilus ducreyi.</title>
        <authorList>
            <person name="Munson R.S. Jr."/>
            <person name="Ray W.C."/>
            <person name="Mahairas G."/>
            <person name="Sabo P."/>
            <person name="Mungur R."/>
            <person name="Johnson L."/>
            <person name="Nguyen D."/>
            <person name="Wang J."/>
            <person name="Forst C."/>
            <person name="Hood L."/>
        </authorList>
    </citation>
    <scope>NUCLEOTIDE SEQUENCE [LARGE SCALE GENOMIC DNA]</scope>
    <source>
        <strain>35000HP / ATCC 700724</strain>
    </source>
</reference>
<proteinExistence type="inferred from homology"/>
<protein>
    <recommendedName>
        <fullName evidence="1">Fluoride-specific ion channel FluC</fullName>
    </recommendedName>
</protein>